<proteinExistence type="inferred from homology"/>
<reference key="1">
    <citation type="journal article" date="2006" name="J. Bacteriol.">
        <title>Complete genome sequence of the dehalorespiring bacterium Desulfitobacterium hafniense Y51 and comparison with Dehalococcoides ethenogenes 195.</title>
        <authorList>
            <person name="Nonaka H."/>
            <person name="Keresztes G."/>
            <person name="Shinoda Y."/>
            <person name="Ikenaga Y."/>
            <person name="Abe M."/>
            <person name="Naito K."/>
            <person name="Inatomi K."/>
            <person name="Furukawa K."/>
            <person name="Inui M."/>
            <person name="Yukawa H."/>
        </authorList>
    </citation>
    <scope>NUCLEOTIDE SEQUENCE [LARGE SCALE GENOMIC DNA]</scope>
    <source>
        <strain>Y51</strain>
    </source>
</reference>
<evidence type="ECO:0000255" key="1">
    <source>
        <dbReference type="HAMAP-Rule" id="MF_01451"/>
    </source>
</evidence>
<evidence type="ECO:0000256" key="2">
    <source>
        <dbReference type="SAM" id="MobiDB-lite"/>
    </source>
</evidence>
<comment type="function">
    <text evidence="1">The heterodimer acts as both an ATP-dependent DNA helicase and an ATP-dependent, dual-direction single-stranded exonuclease. Recognizes the chi site generating a DNA molecule suitable for the initiation of homologous recombination. The AddA nuclease domain is required for chi fragment generation; this subunit has the helicase and 3' -&gt; 5' nuclease activities.</text>
</comment>
<comment type="catalytic activity">
    <reaction evidence="1">
        <text>Couples ATP hydrolysis with the unwinding of duplex DNA by translocating in the 3'-5' direction.</text>
        <dbReference type="EC" id="5.6.2.4"/>
    </reaction>
</comment>
<comment type="catalytic activity">
    <reaction evidence="1">
        <text>ATP + H2O = ADP + phosphate + H(+)</text>
        <dbReference type="Rhea" id="RHEA:13065"/>
        <dbReference type="ChEBI" id="CHEBI:15377"/>
        <dbReference type="ChEBI" id="CHEBI:15378"/>
        <dbReference type="ChEBI" id="CHEBI:30616"/>
        <dbReference type="ChEBI" id="CHEBI:43474"/>
        <dbReference type="ChEBI" id="CHEBI:456216"/>
        <dbReference type="EC" id="5.6.2.4"/>
    </reaction>
</comment>
<comment type="cofactor">
    <cofactor evidence="1">
        <name>Mg(2+)</name>
        <dbReference type="ChEBI" id="CHEBI:18420"/>
    </cofactor>
</comment>
<comment type="subunit">
    <text evidence="1">Heterodimer of AddA and AddB/RexB.</text>
</comment>
<comment type="similarity">
    <text evidence="1">Belongs to the helicase family. AddA subfamily.</text>
</comment>
<organism>
    <name type="scientific">Desulfitobacterium hafniense (strain Y51)</name>
    <dbReference type="NCBI Taxonomy" id="138119"/>
    <lineage>
        <taxon>Bacteria</taxon>
        <taxon>Bacillati</taxon>
        <taxon>Bacillota</taxon>
        <taxon>Clostridia</taxon>
        <taxon>Eubacteriales</taxon>
        <taxon>Desulfitobacteriaceae</taxon>
        <taxon>Desulfitobacterium</taxon>
    </lineage>
</organism>
<gene>
    <name evidence="1" type="primary">addA</name>
    <name type="ordered locus">DSY1685</name>
</gene>
<protein>
    <recommendedName>
        <fullName evidence="1">ATP-dependent helicase/nuclease subunit A</fullName>
        <ecNumber evidence="1">3.1.-.-</ecNumber>
        <ecNumber evidence="1">5.6.2.4</ecNumber>
    </recommendedName>
    <alternativeName>
        <fullName evidence="1">ATP-dependent helicase/nuclease AddA</fullName>
    </alternativeName>
    <alternativeName>
        <fullName evidence="1">DNA 3'-5' helicase AddA</fullName>
    </alternativeName>
</protein>
<sequence length="1392" mass="157155">MNNPKWTPAQQAAIDLKGQLLVAAAAGSGKTAVLVQRLFKQITDVDEQVDVDRFLVVTFTKAAAAEMRERIGKALDEALFGAAEPAQVEHLLQQRALLYRASITTLHSFCMELIRQYFYLIELDPAFRVADEAEADLLRQDTLEDLFEAYYGEETPAFQSLVDAFGTDRDDQPLMASILRLHEFAMSQVHPGEWLEHLPAAYDWHSLDDLMESPWGQVVRQGVRDKVEEGLILLERAYRLAELPGGPVHYLPVLEDDQSRLGFLREMAEKGTWSDIETAFKSAAAFPGLPRGSKKNLPDSLIDEENSKRLREESKKARDEAKKKLEEIKNTVFSVPLTDQLPFLNKMGELVGTLAQVTQHFAREYQKAKRQRNCVDFSDLEHYALQLLAKDKQPTEIALKLQAYYAEVLVDEYQDINPVQERILQLVSRQEEGKANLFMVGDVKQSIYRFRMADPGLFLRKYGEFPHYQEGGGAAPNLVIDLNQNFRSRPEVIQGINYLFYQIMTEGAGEIIYDEQAALRPGAKFVSDGELRTAEGPIEVHLFDPKAIDLSLGQKRGAEDAATGADSPAKGEGEEFEQNREPESGDDESSLEEAETARIEARLVAARIQKMVLEREFQIHDKELGDYRPVQYADIVILMRSLASVASVYAEEFQKAGIPVYAETNSGYFGTNEVDTVLSLLKIIDNPRLDIPFAAVLRSPLVGMNGTELGKLRSLLPQGDFYETLVLTFWAGDAHRQEEGHEFYSEIREILGKHWESLPQLEVKVRHILETSPEIKEKVDAFFPKLQEWRHRSRRTSLADLLWHLYEDTGYLAYVGTLPAGAQRQANLRVLYDRACRYEATNYRGLFRFLRFLEKFQSQGKDLGNASIVGEKENVVRFITVHSSKGLEFPVVFIAGLGKKFNTRSLSSQLLLHSHLGVGIPLIDIENQVRYPSVIQYAVKERLWQEALAEELRILYVALTRGKERLFLFGHQHKLAEAINKWRSLALSCPDTAFPDGQLRGAKTYLDWLGPALVRHPEDLFKLGSFPTASELPDSSSQWKVILHDQIAGKGPVQEATSSQDEIILPDQETLGEREASEETEIPGETEASGKTEIPGETKNSEETKTSEDKKNLEAQTPETADLDTKNLQEEVFRQLNWQYPYPEGVNQSAKTSVSELKRQSLWYMDNEYSSPSSSSSSSPSALSAPSFLRPQFIVSRKELTPAERGTAVHAAIQHLPLALWRDTWEELAQEVRESMLQEHIDSLIRREILSAEQGGAVSVSQLKNLLDSTSGKRLWEAEEVRREVPFTLSLRLRAQKEPVLVQGIIDAVLLSHQEHEAQVMDFKTDNLAGVPDPELVLTQRYGLQLGLYALAVERLLKVPVRECIIYATSLNREFVMQREAVQAALESVVIV</sequence>
<feature type="chain" id="PRO_0000379267" description="ATP-dependent helicase/nuclease subunit A">
    <location>
        <begin position="1"/>
        <end position="1392"/>
    </location>
</feature>
<feature type="domain" description="UvrD-like helicase ATP-binding" evidence="1">
    <location>
        <begin position="3"/>
        <end position="489"/>
    </location>
</feature>
<feature type="domain" description="UvrD-like helicase C-terminal" evidence="1">
    <location>
        <begin position="556"/>
        <end position="886"/>
    </location>
</feature>
<feature type="region of interest" description="Disordered" evidence="2">
    <location>
        <begin position="291"/>
        <end position="319"/>
    </location>
</feature>
<feature type="region of interest" description="Disordered" evidence="2">
    <location>
        <begin position="556"/>
        <end position="594"/>
    </location>
</feature>
<feature type="region of interest" description="Disordered" evidence="2">
    <location>
        <begin position="1051"/>
        <end position="1126"/>
    </location>
</feature>
<feature type="compositionally biased region" description="Basic and acidic residues" evidence="2">
    <location>
        <begin position="305"/>
        <end position="319"/>
    </location>
</feature>
<feature type="compositionally biased region" description="Basic and acidic residues" evidence="2">
    <location>
        <begin position="569"/>
        <end position="583"/>
    </location>
</feature>
<feature type="compositionally biased region" description="Acidic residues" evidence="2">
    <location>
        <begin position="584"/>
        <end position="594"/>
    </location>
</feature>
<feature type="compositionally biased region" description="Basic and acidic residues" evidence="2">
    <location>
        <begin position="1088"/>
        <end position="1113"/>
    </location>
</feature>
<feature type="binding site" evidence="1">
    <location>
        <begin position="24"/>
        <end position="31"/>
    </location>
    <ligand>
        <name>ATP</name>
        <dbReference type="ChEBI" id="CHEBI:30616"/>
    </ligand>
</feature>
<accession>Q24WW8</accession>
<keyword id="KW-0067">ATP-binding</keyword>
<keyword id="KW-0227">DNA damage</keyword>
<keyword id="KW-0234">DNA repair</keyword>
<keyword id="KW-0238">DNA-binding</keyword>
<keyword id="KW-0269">Exonuclease</keyword>
<keyword id="KW-0347">Helicase</keyword>
<keyword id="KW-0378">Hydrolase</keyword>
<keyword id="KW-0413">Isomerase</keyword>
<keyword id="KW-0540">Nuclease</keyword>
<keyword id="KW-0547">Nucleotide-binding</keyword>
<keyword id="KW-1185">Reference proteome</keyword>
<dbReference type="EC" id="3.1.-.-" evidence="1"/>
<dbReference type="EC" id="5.6.2.4" evidence="1"/>
<dbReference type="EMBL" id="AP008230">
    <property type="protein sequence ID" value="BAE83474.1"/>
    <property type="molecule type" value="Genomic_DNA"/>
</dbReference>
<dbReference type="RefSeq" id="WP_011459831.1">
    <property type="nucleotide sequence ID" value="NC_007907.1"/>
</dbReference>
<dbReference type="SMR" id="Q24WW8"/>
<dbReference type="STRING" id="138119.DSY1685"/>
<dbReference type="KEGG" id="dsy:DSY1685"/>
<dbReference type="eggNOG" id="COG1074">
    <property type="taxonomic scope" value="Bacteria"/>
</dbReference>
<dbReference type="HOGENOM" id="CLU_001114_3_1_9"/>
<dbReference type="Proteomes" id="UP000001946">
    <property type="component" value="Chromosome"/>
</dbReference>
<dbReference type="GO" id="GO:0005829">
    <property type="term" value="C:cytosol"/>
    <property type="evidence" value="ECO:0007669"/>
    <property type="project" value="TreeGrafter"/>
</dbReference>
<dbReference type="GO" id="GO:0033202">
    <property type="term" value="C:DNA helicase complex"/>
    <property type="evidence" value="ECO:0007669"/>
    <property type="project" value="TreeGrafter"/>
</dbReference>
<dbReference type="GO" id="GO:0043138">
    <property type="term" value="F:3'-5' DNA helicase activity"/>
    <property type="evidence" value="ECO:0007669"/>
    <property type="project" value="UniProtKB-UniRule"/>
</dbReference>
<dbReference type="GO" id="GO:0008408">
    <property type="term" value="F:3'-5' exonuclease activity"/>
    <property type="evidence" value="ECO:0007669"/>
    <property type="project" value="UniProtKB-UniRule"/>
</dbReference>
<dbReference type="GO" id="GO:0005524">
    <property type="term" value="F:ATP binding"/>
    <property type="evidence" value="ECO:0007669"/>
    <property type="project" value="UniProtKB-UniRule"/>
</dbReference>
<dbReference type="GO" id="GO:0016887">
    <property type="term" value="F:ATP hydrolysis activity"/>
    <property type="evidence" value="ECO:0007669"/>
    <property type="project" value="RHEA"/>
</dbReference>
<dbReference type="GO" id="GO:0003690">
    <property type="term" value="F:double-stranded DNA binding"/>
    <property type="evidence" value="ECO:0007669"/>
    <property type="project" value="UniProtKB-UniRule"/>
</dbReference>
<dbReference type="GO" id="GO:0000724">
    <property type="term" value="P:double-strand break repair via homologous recombination"/>
    <property type="evidence" value="ECO:0007669"/>
    <property type="project" value="UniProtKB-UniRule"/>
</dbReference>
<dbReference type="CDD" id="cd17932">
    <property type="entry name" value="DEXQc_UvrD"/>
    <property type="match status" value="1"/>
</dbReference>
<dbReference type="Gene3D" id="1.10.274.50">
    <property type="match status" value="1"/>
</dbReference>
<dbReference type="Gene3D" id="3.90.320.10">
    <property type="match status" value="1"/>
</dbReference>
<dbReference type="Gene3D" id="3.40.50.300">
    <property type="entry name" value="P-loop containing nucleotide triphosphate hydrolases"/>
    <property type="match status" value="4"/>
</dbReference>
<dbReference type="HAMAP" id="MF_01451">
    <property type="entry name" value="AddA"/>
    <property type="match status" value="1"/>
</dbReference>
<dbReference type="InterPro" id="IPR014152">
    <property type="entry name" value="AddA"/>
</dbReference>
<dbReference type="InterPro" id="IPR014017">
    <property type="entry name" value="DNA_helicase_UvrD-like_C"/>
</dbReference>
<dbReference type="InterPro" id="IPR000212">
    <property type="entry name" value="DNA_helicase_UvrD/REP"/>
</dbReference>
<dbReference type="InterPro" id="IPR027417">
    <property type="entry name" value="P-loop_NTPase"/>
</dbReference>
<dbReference type="InterPro" id="IPR011604">
    <property type="entry name" value="PDDEXK-like_dom_sf"/>
</dbReference>
<dbReference type="InterPro" id="IPR038726">
    <property type="entry name" value="PDDEXK_AddAB-type"/>
</dbReference>
<dbReference type="InterPro" id="IPR011335">
    <property type="entry name" value="Restrct_endonuc-II-like"/>
</dbReference>
<dbReference type="InterPro" id="IPR014016">
    <property type="entry name" value="UvrD-like_ATP-bd"/>
</dbReference>
<dbReference type="PANTHER" id="PTHR11070:SF48">
    <property type="entry name" value="ATP-DEPENDENT HELICASE_NUCLEASE SUBUNIT A"/>
    <property type="match status" value="1"/>
</dbReference>
<dbReference type="PANTHER" id="PTHR11070">
    <property type="entry name" value="UVRD / RECB / PCRA DNA HELICASE FAMILY MEMBER"/>
    <property type="match status" value="1"/>
</dbReference>
<dbReference type="Pfam" id="PF12705">
    <property type="entry name" value="PDDEXK_1"/>
    <property type="match status" value="1"/>
</dbReference>
<dbReference type="Pfam" id="PF00580">
    <property type="entry name" value="UvrD-helicase"/>
    <property type="match status" value="1"/>
</dbReference>
<dbReference type="Pfam" id="PF13361">
    <property type="entry name" value="UvrD_C"/>
    <property type="match status" value="1"/>
</dbReference>
<dbReference type="SUPFAM" id="SSF52540">
    <property type="entry name" value="P-loop containing nucleoside triphosphate hydrolases"/>
    <property type="match status" value="1"/>
</dbReference>
<dbReference type="SUPFAM" id="SSF52980">
    <property type="entry name" value="Restriction endonuclease-like"/>
    <property type="match status" value="1"/>
</dbReference>
<dbReference type="PROSITE" id="PS51198">
    <property type="entry name" value="UVRD_HELICASE_ATP_BIND"/>
    <property type="match status" value="1"/>
</dbReference>
<dbReference type="PROSITE" id="PS51217">
    <property type="entry name" value="UVRD_HELICASE_CTER"/>
    <property type="match status" value="1"/>
</dbReference>
<name>ADDA_DESHY</name>